<proteinExistence type="evidence at protein level"/>
<organism evidence="16">
    <name type="scientific">Drosophila melanogaster</name>
    <name type="common">Fruit fly</name>
    <dbReference type="NCBI Taxonomy" id="7227"/>
    <lineage>
        <taxon>Eukaryota</taxon>
        <taxon>Metazoa</taxon>
        <taxon>Ecdysozoa</taxon>
        <taxon>Arthropoda</taxon>
        <taxon>Hexapoda</taxon>
        <taxon>Insecta</taxon>
        <taxon>Pterygota</taxon>
        <taxon>Neoptera</taxon>
        <taxon>Endopterygota</taxon>
        <taxon>Diptera</taxon>
        <taxon>Brachycera</taxon>
        <taxon>Muscomorpha</taxon>
        <taxon>Ephydroidea</taxon>
        <taxon>Drosophilidae</taxon>
        <taxon>Drosophila</taxon>
        <taxon>Sophophora</taxon>
    </lineage>
</organism>
<name>DOA_DROME</name>
<protein>
    <recommendedName>
        <fullName evidence="13">Serine/threonine-protein kinase Doa</fullName>
        <ecNumber evidence="5 6 8 9">2.7.12.1</ecNumber>
    </recommendedName>
    <alternativeName>
        <fullName evidence="15">Protein darkener of apricot</fullName>
    </alternativeName>
</protein>
<accession>P49762</accession>
<accession>Q86B73</accession>
<accession>Q8IMM0</accession>
<accession>Q8T041</accession>
<accession>Q95RC9</accession>
<accession>Q9VAR8</accession>
<feature type="chain" id="PRO_0000085926" description="Serine/threonine-protein kinase Doa">
    <location>
        <begin position="1"/>
        <end position="832"/>
    </location>
</feature>
<feature type="domain" description="Protein kinase" evidence="1">
    <location>
        <begin position="479"/>
        <end position="799"/>
    </location>
</feature>
<feature type="region of interest" description="Disordered" evidence="3">
    <location>
        <begin position="1"/>
        <end position="86"/>
    </location>
</feature>
<feature type="region of interest" description="Disordered" evidence="3">
    <location>
        <begin position="135"/>
        <end position="158"/>
    </location>
</feature>
<feature type="region of interest" description="Disordered" evidence="3">
    <location>
        <begin position="179"/>
        <end position="215"/>
    </location>
</feature>
<feature type="region of interest" description="Disordered" evidence="3">
    <location>
        <begin position="258"/>
        <end position="419"/>
    </location>
</feature>
<feature type="region of interest" description="Disordered" evidence="3">
    <location>
        <begin position="809"/>
        <end position="832"/>
    </location>
</feature>
<feature type="compositionally biased region" description="Polar residues" evidence="3">
    <location>
        <begin position="8"/>
        <end position="18"/>
    </location>
</feature>
<feature type="compositionally biased region" description="Basic and acidic residues" evidence="3">
    <location>
        <begin position="20"/>
        <end position="32"/>
    </location>
</feature>
<feature type="compositionally biased region" description="Low complexity" evidence="3">
    <location>
        <begin position="40"/>
        <end position="53"/>
    </location>
</feature>
<feature type="compositionally biased region" description="Low complexity" evidence="3">
    <location>
        <begin position="137"/>
        <end position="158"/>
    </location>
</feature>
<feature type="compositionally biased region" description="Low complexity" evidence="3">
    <location>
        <begin position="183"/>
        <end position="203"/>
    </location>
</feature>
<feature type="compositionally biased region" description="Polar residues" evidence="3">
    <location>
        <begin position="271"/>
        <end position="282"/>
    </location>
</feature>
<feature type="compositionally biased region" description="Low complexity" evidence="3">
    <location>
        <begin position="285"/>
        <end position="310"/>
    </location>
</feature>
<feature type="compositionally biased region" description="Low complexity" evidence="3">
    <location>
        <begin position="347"/>
        <end position="365"/>
    </location>
</feature>
<feature type="compositionally biased region" description="Low complexity" evidence="3">
    <location>
        <begin position="396"/>
        <end position="419"/>
    </location>
</feature>
<feature type="compositionally biased region" description="Basic and acidic residues" evidence="3">
    <location>
        <begin position="823"/>
        <end position="832"/>
    </location>
</feature>
<feature type="active site" description="Proton acceptor" evidence="1 2">
    <location>
        <position position="605"/>
    </location>
</feature>
<feature type="binding site" evidence="1">
    <location>
        <begin position="485"/>
        <end position="493"/>
    </location>
    <ligand>
        <name>ATP</name>
        <dbReference type="ChEBI" id="CHEBI:30616"/>
    </ligand>
</feature>
<feature type="binding site" evidence="1">
    <location>
        <position position="508"/>
    </location>
    <ligand>
        <name>ATP</name>
        <dbReference type="ChEBI" id="CHEBI:30616"/>
    </ligand>
</feature>
<feature type="splice variant" id="VSP_008269" description="In isoform B." evidence="13">
    <location>
        <begin position="1"/>
        <end position="315"/>
    </location>
</feature>
<feature type="splice variant" id="VSP_008268" description="In isoform A." evidence="11">
    <location>
        <begin position="1"/>
        <end position="252"/>
    </location>
</feature>
<feature type="splice variant" id="VSP_062419" description="In isoform P.">
    <original>M</original>
    <variation>MSNELSELIALGCPDLAAQKPQGGSTQVELILNTERRLSIKQMTATDLATLRAAAAAEAEARSRAQAEAEALAIAQEQFRQAREAESKARARAALEVQAQLQRVMESEKRRQQEEEERRIRQQAEEEQEDDEDDDNDEEEELTKGSLPTNSGPRERIASLPCNIDDAMEMHLLNVSQPKASSKDDSPPKKSTSHIADSIELLRMQRAARDARSHNRSRERSISPDRNRERSAAPDRLQSSASMSSLDSASASASRQPSKAGSRRGSTTSATGVEPPLMAAPPQPTKFPLTKTVSAPNMDRRRSSLTSLFPGPSPLVAPEPSLHTNPDPRVQEQIEEDRRRRRMDDGYREIPSGKMVHRTKTPPPVGTNLGVSLKRVTAPSGSITIKPKESPMLGVVLRRVEKKTVPQKSILDDDKPLYHFSIVRSDHKEHVPAQKPKPKPAPPAAKPSPGGILTGPQVIRNAPKQPVPVKPQRPMPGVPITITKIEGDKIIIIKKIIVPKNSKIPEQYLQMSEDAGKPANTVPSAVSSSAAPSPSLRTKEESQPAMQKPTPPPASGQQFFQVVSPQFASVLSSSIPESKCAVRSPISSPLAIRKSRPPLLPSSPKSTPPLPRKHHPLAYNAATGTISSASGAALPSRLMATIASSPASSISLSSCSSPSSSPPPPVPCRAPKNASRPVAVTAAPPPSTSNEISLDKLLQQQQELEEKSAAATNSAKMDANFYDAEIEMMNKYLKSLPDYSELDRKLHQEFQECEDLYDKIKRQQQPLAKSNSQQSVTKAVGPGVPAISSGLSKSSSINFAQNPSSRGAAPRLAYPSIFSQAAGEPKLQRSISSSNMPISAPNSMRPLPTKNGLQSGSNLSLNKQLMNEFWSENLTSSQKRQTPKRTFWNYEKICGAQLGDAGQPFKVDAKTAKKLAIFDPTVAEAAQKELQRPQQSQVPQNQPHKLQKNASLSHLDLKVRQAVTKDDLYKLICNEQSPLAGSNFVSRVPVKQQFPAQQQQVLPKSMSMTHVPGGGQPMGAPLLRTSSRTHIPSYMKNLPSLSRSTSNSAILMTQPRKEPPPKEPLKAPAPLPAIAAPTVGKPSGVLKSSSSSCVPSPRCAAAFFRRPQEANNPQQQHHQPLQKPQQVAPIEESGPGDSASLERKSEKSNSTLSTSSFTVTNCCTTHLPQLSKFTSSFHIAPTTATTTAATATPTPTGAATTSDQQQQSGGTPAM</variation>
    <location>
        <position position="1"/>
    </location>
</feature>
<feature type="splice variant" id="VSP_008270" description="In isoform A." evidence="11">
    <original>APQQQSKIGYPRTGAPLTHSASFSSAQRPTALQFHQQHQQQQHLQQQQQHPQQQQHQHSSFGVGMMSRNYYNMPKQPERKPLQTFDPYAYPKPNQMQPVKYQQQQQHPHTQFQNASAGGGGGGAAGLQYDPNTNTQLFYASPASSSSNKQPQQPQQQQQQQQSQLQQSNSVIFNHSGQQHQPHQQQQNEMSKSALGLHFIE</original>
    <variation>MQLPSLKDKLMPSGSVQQAKANFSWQSLTQLLSGLWQRLYLPRSPFLALPAPPLATPPANTTQRRAKKEMPRTRRLHHSRDRSSAGTRDKRRRHDTADHSPPLAEAPSPPRITNTHHTRSAAKRRRHELDAKKAQISKEPTFDDSISTRRRKERSKRSHRKSPAASRRQHKYRYRDETSHSSSRRRHRDRAKDERDSGRNNRQSQAK</variation>
    <location>
        <begin position="253"/>
        <end position="453"/>
    </location>
</feature>
<feature type="splice variant" id="VSP_008271" description="In isoform B." evidence="13">
    <original>GMMSRNYYNMPKQPERKPLQTFDPYAYPKPNQMQPVKYQQQQQHPHTQFQNASAGGGGGGAAGLQYDPNTNTQLFYASPASSSSNKQPQQPQQQQQQQQSQLQQSNSVIFNHSGQQHQPHQQQQNEMSKSALGLHFIE</original>
    <variation>MPRTRRLHHSRDRSSAGTRDKRRRHDTADHSPPLAEAPSPPRITNTHHTRSAAKRRRHELDAKKAQISKEPTFDDSISTRRRKERSKRSHRKSPAASRRQHKYRYRDETSHSSSRRRHRDRAKDERDSGRNNRQSQAK</variation>
    <location>
        <begin position="316"/>
        <end position="453"/>
    </location>
</feature>
<feature type="splice variant" id="VSP_008272" description="In isoform A and isoform B." evidence="11">
    <location>
        <begin position="722"/>
        <end position="727"/>
    </location>
</feature>
<feature type="mutagenesis site" description="Loss of activity." evidence="9">
    <original>K</original>
    <variation>R</variation>
    <location>
        <position position="508"/>
    </location>
</feature>
<keyword id="KW-0877">Alternative promoter usage</keyword>
<keyword id="KW-0025">Alternative splicing</keyword>
<keyword id="KW-0067">ATP-binding</keyword>
<keyword id="KW-0963">Cytoplasm</keyword>
<keyword id="KW-0217">Developmental protein</keyword>
<keyword id="KW-0418">Kinase</keyword>
<keyword id="KW-0547">Nucleotide-binding</keyword>
<keyword id="KW-0539">Nucleus</keyword>
<keyword id="KW-0597">Phosphoprotein</keyword>
<keyword id="KW-1185">Reference proteome</keyword>
<keyword id="KW-0716">Sensory transduction</keyword>
<keyword id="KW-0723">Serine/threonine-protein kinase</keyword>
<keyword id="KW-0808">Transferase</keyword>
<keyword id="KW-0829">Tyrosine-protein kinase</keyword>
<keyword id="KW-0844">Vision</keyword>
<gene>
    <name evidence="15" type="primary">Doa</name>
    <name evidence="15" type="ORF">CG42320</name>
</gene>
<evidence type="ECO:0000255" key="1">
    <source>
        <dbReference type="PROSITE-ProRule" id="PRU00159"/>
    </source>
</evidence>
<evidence type="ECO:0000255" key="2">
    <source>
        <dbReference type="PROSITE-ProRule" id="PRU10027"/>
    </source>
</evidence>
<evidence type="ECO:0000256" key="3">
    <source>
        <dbReference type="SAM" id="MobiDB-lite"/>
    </source>
</evidence>
<evidence type="ECO:0000269" key="4">
    <source>
    </source>
</evidence>
<evidence type="ECO:0000269" key="5">
    <source>
    </source>
</evidence>
<evidence type="ECO:0000269" key="6">
    <source>
    </source>
</evidence>
<evidence type="ECO:0000269" key="7">
    <source>
    </source>
</evidence>
<evidence type="ECO:0000269" key="8">
    <source>
    </source>
</evidence>
<evidence type="ECO:0000269" key="9">
    <source>
    </source>
</evidence>
<evidence type="ECO:0000303" key="10">
    <source>
    </source>
</evidence>
<evidence type="ECO:0000303" key="11">
    <source>
    </source>
</evidence>
<evidence type="ECO:0000303" key="12">
    <source>
    </source>
</evidence>
<evidence type="ECO:0000305" key="13"/>
<evidence type="ECO:0000305" key="14">
    <source>
    </source>
</evidence>
<evidence type="ECO:0000312" key="15">
    <source>
        <dbReference type="FlyBase" id="FBgn0265998"/>
    </source>
</evidence>
<evidence type="ECO:0000312" key="16">
    <source>
        <dbReference type="Proteomes" id="UP000000803"/>
    </source>
</evidence>
<sequence length="832" mass="95723">MVAANLEVPTSSSSSAATKRQKDVDNKLEKCLNDMLKLKTSSNNNSTSNSNNNAIMSHSLTGEHKDPKTALEGPTSSSSSSSSKYIGESQIPVPVQLYDPQKPLLQQQQQQQRICYPIGKSNSTSQLPMGGYQRLLQHQQQQHHQQQQQQHQEQQQYPQHKRPFLNWNSFACSAMNGASDPFMQQQHMPAHQQQQHLPHKLQQSYSSSHVPKQAPKSGLAMFLQKNTNKENKFGQPMQQQPPGMMPQMYGYQAPQQQSKIGYPRTGAPLTHSASFSSAQRPTALQFHQQHQQQQHLQQQQQHPQQQQHQHSSFGVGMMSRNYYNMPKQPERKPLQTFDPYAYPKPNQMQPVKYQQQQQHPHTQFQNASAGGGGGGAAGLQYDPNTNTQLFYASPASSSSNKQPQQPQQQQQQQQSQLQQSNSVIFNHSGQQHQPHQQQQNEMSKSALGLHFIETAKPVIQDDADGHLIYHTGDILHHRYKIMATLGEGTFGRVVKVKDMERDYCMALKIIKNVEKYREAAKLEINALEKIAQKDPHCDHLCVKMIDWFDYHGHMCIVFEMLGLSVFDFLRENNYEPYPLDQVRHMAYQLCYSVKFLHDNRLTHTDLKPENILFVDSDYTSHYNHKINREVRRVKNTDVRLIDFGSATFDHEHHSTIVSTRHYRAPEVILELGWSQPCDVWSIGCILFELYLGITLFQTHDNREHLAMMERILGQIPYRMARNHTLYSKTKTKYFYHGKLDWDEKSSAGRYVRDHCKPLFLCQLSDSEDHCELFSLIKKMLEYEPSSRITLGEALHHPFFDRLPPHHRVGEVSNKQPLSSGSSSRERSHSLSR</sequence>
<dbReference type="EC" id="2.7.12.1" evidence="5 6 8 9"/>
<dbReference type="EMBL" id="X78715">
    <property type="protein sequence ID" value="CAA55367.1"/>
    <property type="status" value="ALT_SEQ"/>
    <property type="molecule type" value="Genomic_DNA"/>
</dbReference>
<dbReference type="EMBL" id="AE014297">
    <property type="protein sequence ID" value="AAF56832.3"/>
    <property type="molecule type" value="Genomic_DNA"/>
</dbReference>
<dbReference type="EMBL" id="AE014297">
    <property type="protein sequence ID" value="AAF56833.2"/>
    <property type="molecule type" value="Genomic_DNA"/>
</dbReference>
<dbReference type="EMBL" id="AE014297">
    <property type="protein sequence ID" value="AAN14305.1"/>
    <property type="molecule type" value="Genomic_DNA"/>
</dbReference>
<dbReference type="EMBL" id="AE014297">
    <property type="protein sequence ID" value="AAO41610.2"/>
    <property type="molecule type" value="Genomic_DNA"/>
</dbReference>
<dbReference type="EMBL" id="AY061474">
    <property type="protein sequence ID" value="AAL29022.1"/>
    <property type="molecule type" value="mRNA"/>
</dbReference>
<dbReference type="EMBL" id="AY069573">
    <property type="protein sequence ID" value="AAL39718.1"/>
    <property type="molecule type" value="mRNA"/>
</dbReference>
<dbReference type="PIR" id="A54099">
    <property type="entry name" value="A54099"/>
</dbReference>
<dbReference type="RefSeq" id="NP_001014679.1">
    <molecule id="P49762-1"/>
    <property type="nucleotide sequence ID" value="NM_001014679.2"/>
</dbReference>
<dbReference type="RefSeq" id="NP_001014680.1">
    <molecule id="P49762-2"/>
    <property type="nucleotide sequence ID" value="NM_001014680.4"/>
</dbReference>
<dbReference type="RefSeq" id="NP_001014681.2">
    <molecule id="P49762-4"/>
    <property type="nucleotide sequence ID" value="NM_001014681.4"/>
</dbReference>
<dbReference type="RefSeq" id="NP_001014682.1">
    <molecule id="P49762-3"/>
    <property type="nucleotide sequence ID" value="NM_001014682.3"/>
</dbReference>
<dbReference type="RefSeq" id="NP_001036765.1">
    <molecule id="P49762-2"/>
    <property type="nucleotide sequence ID" value="NM_001043300.3"/>
</dbReference>
<dbReference type="RefSeq" id="NP_001138120.1">
    <molecule id="P49762-2"/>
    <property type="nucleotide sequence ID" value="NM_001144648.3"/>
</dbReference>
<dbReference type="RefSeq" id="NP_001138121.1">
    <molecule id="P49762-2"/>
    <property type="nucleotide sequence ID" value="NM_001144649.2"/>
</dbReference>
<dbReference type="RefSeq" id="NP_001138122.1">
    <molecule id="P49762-3"/>
    <property type="nucleotide sequence ID" value="NM_001144650.1"/>
</dbReference>
<dbReference type="SMR" id="P49762"/>
<dbReference type="BioGRID" id="68286">
    <property type="interactions" value="60"/>
</dbReference>
<dbReference type="FunCoup" id="P49762">
    <property type="interactions" value="637"/>
</dbReference>
<dbReference type="IntAct" id="P49762">
    <property type="interactions" value="51"/>
</dbReference>
<dbReference type="STRING" id="7227.FBpp0289029"/>
<dbReference type="GlyGen" id="P49762">
    <property type="glycosylation" value="1 site"/>
</dbReference>
<dbReference type="PaxDb" id="7227-FBpp0289029"/>
<dbReference type="DNASU" id="43415"/>
<dbReference type="EnsemblMetazoa" id="FBtr0299742">
    <molecule id="P49762-2"/>
    <property type="protein sequence ID" value="FBpp0289020"/>
    <property type="gene ID" value="FBgn0265998"/>
</dbReference>
<dbReference type="EnsemblMetazoa" id="FBtr0299743">
    <molecule id="P49762-1"/>
    <property type="protein sequence ID" value="FBpp0289021"/>
    <property type="gene ID" value="FBgn0265998"/>
</dbReference>
<dbReference type="EnsemblMetazoa" id="FBtr0299745">
    <molecule id="P49762-2"/>
    <property type="protein sequence ID" value="FBpp0289023"/>
    <property type="gene ID" value="FBgn0265998"/>
</dbReference>
<dbReference type="EnsemblMetazoa" id="FBtr0299748">
    <molecule id="P49762-3"/>
    <property type="protein sequence ID" value="FBpp0289026"/>
    <property type="gene ID" value="FBgn0265998"/>
</dbReference>
<dbReference type="EnsemblMetazoa" id="FBtr0299749">
    <molecule id="P49762-2"/>
    <property type="protein sequence ID" value="FBpp0289027"/>
    <property type="gene ID" value="FBgn0265998"/>
</dbReference>
<dbReference type="EnsemblMetazoa" id="FBtr0299750">
    <molecule id="P49762-2"/>
    <property type="protein sequence ID" value="FBpp0289028"/>
    <property type="gene ID" value="FBgn0265998"/>
</dbReference>
<dbReference type="EnsemblMetazoa" id="FBtr0299751">
    <molecule id="P49762-4"/>
    <property type="protein sequence ID" value="FBpp0289029"/>
    <property type="gene ID" value="FBgn0265998"/>
</dbReference>
<dbReference type="EnsemblMetazoa" id="FBtr0299752">
    <molecule id="P49762-3"/>
    <property type="protein sequence ID" value="FBpp0289030"/>
    <property type="gene ID" value="FBgn0265998"/>
</dbReference>
<dbReference type="GeneID" id="43415"/>
<dbReference type="KEGG" id="dme:Dmel_CG42320"/>
<dbReference type="AGR" id="FB:FBgn0265998"/>
<dbReference type="CTD" id="43415"/>
<dbReference type="FlyBase" id="FBgn0265998">
    <property type="gene designation" value="Doa"/>
</dbReference>
<dbReference type="VEuPathDB" id="VectorBase:FBgn0265998"/>
<dbReference type="eggNOG" id="KOG0671">
    <property type="taxonomic scope" value="Eukaryota"/>
</dbReference>
<dbReference type="GeneTree" id="ENSGT00940000154947"/>
<dbReference type="HOGENOM" id="CLU_000482_0_0_1"/>
<dbReference type="InParanoid" id="P49762"/>
<dbReference type="OMA" id="GQEDGYR"/>
<dbReference type="OrthoDB" id="283111at2759"/>
<dbReference type="BRENDA" id="2.7.11.1">
    <property type="organism ID" value="1994"/>
</dbReference>
<dbReference type="BRENDA" id="2.7.12.1">
    <property type="organism ID" value="1994"/>
</dbReference>
<dbReference type="SignaLink" id="P49762"/>
<dbReference type="BioGRID-ORCS" id="43415">
    <property type="hits" value="2 hits in 3 CRISPR screens"/>
</dbReference>
<dbReference type="ChiTaRS" id="Doa">
    <property type="organism name" value="fly"/>
</dbReference>
<dbReference type="GenomeRNAi" id="43415"/>
<dbReference type="PRO" id="PR:P49762"/>
<dbReference type="Proteomes" id="UP000000803">
    <property type="component" value="Chromosome 3R"/>
</dbReference>
<dbReference type="Bgee" id="FBgn0265998">
    <property type="expression patterns" value="Expressed in photoreceptor cell R7 (Drosophila) in insect head and 270 other cell types or tissues"/>
</dbReference>
<dbReference type="ExpressionAtlas" id="P49762">
    <property type="expression patterns" value="baseline and differential"/>
</dbReference>
<dbReference type="GO" id="GO:0005737">
    <property type="term" value="C:cytoplasm"/>
    <property type="evidence" value="ECO:0000314"/>
    <property type="project" value="FlyBase"/>
</dbReference>
<dbReference type="GO" id="GO:0005829">
    <property type="term" value="C:cytosol"/>
    <property type="evidence" value="ECO:0007669"/>
    <property type="project" value="UniProtKB-SubCell"/>
</dbReference>
<dbReference type="GO" id="GO:0005783">
    <property type="term" value="C:endoplasmic reticulum"/>
    <property type="evidence" value="ECO:0000314"/>
    <property type="project" value="FlyBase"/>
</dbReference>
<dbReference type="GO" id="GO:0005634">
    <property type="term" value="C:nucleus"/>
    <property type="evidence" value="ECO:0000314"/>
    <property type="project" value="FlyBase"/>
</dbReference>
<dbReference type="GO" id="GO:0005524">
    <property type="term" value="F:ATP binding"/>
    <property type="evidence" value="ECO:0007669"/>
    <property type="project" value="UniProtKB-KW"/>
</dbReference>
<dbReference type="GO" id="GO:0004672">
    <property type="term" value="F:protein kinase activity"/>
    <property type="evidence" value="ECO:0000314"/>
    <property type="project" value="FlyBase"/>
</dbReference>
<dbReference type="GO" id="GO:0106310">
    <property type="term" value="F:protein serine kinase activity"/>
    <property type="evidence" value="ECO:0007669"/>
    <property type="project" value="RHEA"/>
</dbReference>
<dbReference type="GO" id="GO:0004674">
    <property type="term" value="F:protein serine/threonine kinase activity"/>
    <property type="evidence" value="ECO:0000314"/>
    <property type="project" value="UniProtKB"/>
</dbReference>
<dbReference type="GO" id="GO:0004712">
    <property type="term" value="F:protein serine/threonine/tyrosine kinase activity"/>
    <property type="evidence" value="ECO:0007669"/>
    <property type="project" value="UniProtKB-EC"/>
</dbReference>
<dbReference type="GO" id="GO:0004713">
    <property type="term" value="F:protein tyrosine kinase activity"/>
    <property type="evidence" value="ECO:0007669"/>
    <property type="project" value="UniProtKB-KW"/>
</dbReference>
<dbReference type="GO" id="GO:0007350">
    <property type="term" value="P:blastoderm segmentation"/>
    <property type="evidence" value="ECO:0000315"/>
    <property type="project" value="FlyBase"/>
</dbReference>
<dbReference type="GO" id="GO:0048749">
    <property type="term" value="P:compound eye development"/>
    <property type="evidence" value="ECO:0000315"/>
    <property type="project" value="FlyBase"/>
</dbReference>
<dbReference type="GO" id="GO:0042051">
    <property type="term" value="P:compound eye photoreceptor development"/>
    <property type="evidence" value="ECO:0000315"/>
    <property type="project" value="FlyBase"/>
</dbReference>
<dbReference type="GO" id="GO:2000255">
    <property type="term" value="P:negative regulation of male germ cell proliferation"/>
    <property type="evidence" value="ECO:0000315"/>
    <property type="project" value="FlyBase"/>
</dbReference>
<dbReference type="GO" id="GO:0007399">
    <property type="term" value="P:nervous system development"/>
    <property type="evidence" value="ECO:0000315"/>
    <property type="project" value="FlyBase"/>
</dbReference>
<dbReference type="GO" id="GO:0002225">
    <property type="term" value="P:positive regulation of antimicrobial peptide production"/>
    <property type="evidence" value="ECO:0000315"/>
    <property type="project" value="FlyBase"/>
</dbReference>
<dbReference type="GO" id="GO:0045752">
    <property type="term" value="P:positive regulation of Toll signaling pathway"/>
    <property type="evidence" value="ECO:0000315"/>
    <property type="project" value="FlyBase"/>
</dbReference>
<dbReference type="GO" id="GO:0009306">
    <property type="term" value="P:protein secretion"/>
    <property type="evidence" value="ECO:0000315"/>
    <property type="project" value="FlyBase"/>
</dbReference>
<dbReference type="GO" id="GO:0000381">
    <property type="term" value="P:regulation of alternative mRNA splicing, via spliceosome"/>
    <property type="evidence" value="ECO:0007001"/>
    <property type="project" value="FlyBase"/>
</dbReference>
<dbReference type="GO" id="GO:1902513">
    <property type="term" value="P:regulation of organelle transport along microtubule"/>
    <property type="evidence" value="ECO:0000315"/>
    <property type="project" value="UniProtKB"/>
</dbReference>
<dbReference type="GO" id="GO:0043484">
    <property type="term" value="P:regulation of RNA splicing"/>
    <property type="evidence" value="ECO:0000318"/>
    <property type="project" value="GO_Central"/>
</dbReference>
<dbReference type="GO" id="GO:0007548">
    <property type="term" value="P:sex differentiation"/>
    <property type="evidence" value="ECO:0000315"/>
    <property type="project" value="FlyBase"/>
</dbReference>
<dbReference type="GO" id="GO:0018993">
    <property type="term" value="P:somatic sex determination"/>
    <property type="evidence" value="ECO:0000315"/>
    <property type="project" value="FlyBase"/>
</dbReference>
<dbReference type="GO" id="GO:0007601">
    <property type="term" value="P:visual perception"/>
    <property type="evidence" value="ECO:0007669"/>
    <property type="project" value="UniProtKB-KW"/>
</dbReference>
<dbReference type="CDD" id="cd14134">
    <property type="entry name" value="PKc_CLK"/>
    <property type="match status" value="1"/>
</dbReference>
<dbReference type="FunFam" id="1.10.510.10:FF:000145">
    <property type="entry name" value="Dual specificity protein kinase CLK2"/>
    <property type="match status" value="1"/>
</dbReference>
<dbReference type="FunFam" id="3.30.200.20:FF:000061">
    <property type="entry name" value="Dual specificity protein kinase CLK2"/>
    <property type="match status" value="1"/>
</dbReference>
<dbReference type="Gene3D" id="3.30.200.20">
    <property type="entry name" value="Phosphorylase Kinase, domain 1"/>
    <property type="match status" value="1"/>
</dbReference>
<dbReference type="Gene3D" id="1.10.510.10">
    <property type="entry name" value="Transferase(Phosphotransferase) domain 1"/>
    <property type="match status" value="1"/>
</dbReference>
<dbReference type="InterPro" id="IPR051175">
    <property type="entry name" value="CLK_kinases"/>
</dbReference>
<dbReference type="InterPro" id="IPR011009">
    <property type="entry name" value="Kinase-like_dom_sf"/>
</dbReference>
<dbReference type="InterPro" id="IPR000719">
    <property type="entry name" value="Prot_kinase_dom"/>
</dbReference>
<dbReference type="InterPro" id="IPR017441">
    <property type="entry name" value="Protein_kinase_ATP_BS"/>
</dbReference>
<dbReference type="InterPro" id="IPR008271">
    <property type="entry name" value="Ser/Thr_kinase_AS"/>
</dbReference>
<dbReference type="PANTHER" id="PTHR45646">
    <property type="entry name" value="SERINE/THREONINE-PROTEIN KINASE DOA-RELATED"/>
    <property type="match status" value="1"/>
</dbReference>
<dbReference type="PANTHER" id="PTHR45646:SF11">
    <property type="entry name" value="SERINE_THREONINE-PROTEIN KINASE DOA"/>
    <property type="match status" value="1"/>
</dbReference>
<dbReference type="Pfam" id="PF00069">
    <property type="entry name" value="Pkinase"/>
    <property type="match status" value="1"/>
</dbReference>
<dbReference type="SMART" id="SM00220">
    <property type="entry name" value="S_TKc"/>
    <property type="match status" value="1"/>
</dbReference>
<dbReference type="SUPFAM" id="SSF56112">
    <property type="entry name" value="Protein kinase-like (PK-like)"/>
    <property type="match status" value="1"/>
</dbReference>
<dbReference type="PROSITE" id="PS00107">
    <property type="entry name" value="PROTEIN_KINASE_ATP"/>
    <property type="match status" value="1"/>
</dbReference>
<dbReference type="PROSITE" id="PS50011">
    <property type="entry name" value="PROTEIN_KINASE_DOM"/>
    <property type="match status" value="1"/>
</dbReference>
<dbReference type="PROSITE" id="PS00108">
    <property type="entry name" value="PROTEIN_KINASE_ST"/>
    <property type="match status" value="1"/>
</dbReference>
<reference key="1">
    <citation type="journal article" date="1994" name="Genes Dev.">
        <title>The Doa locus encodes a member of a new protein kinase family and is essential for eye and embryonic development in Drosophila melanogaster.</title>
        <authorList>
            <person name="Yun B."/>
            <person name="Farkas R."/>
            <person name="Lee K."/>
            <person name="Rabinow L."/>
        </authorList>
    </citation>
    <scope>NUCLEOTIDE SEQUENCE [GENOMIC DNA]</scope>
    <scope>FUNCTION</scope>
    <scope>CATALYTIC ACTIVITY</scope>
    <scope>TISSUE SPECIFICITY</scope>
    <scope>DEVELOPMENTAL STAGE</scope>
</reference>
<reference key="2">
    <citation type="submission" date="1994-06" db="EMBL/GenBank/DDBJ databases">
        <authorList>
            <person name="Rabinow L."/>
        </authorList>
    </citation>
    <scope>SEQUENCE REVISION</scope>
</reference>
<reference key="3">
    <citation type="journal article" date="2000" name="Science">
        <title>The genome sequence of Drosophila melanogaster.</title>
        <authorList>
            <person name="Adams M.D."/>
            <person name="Celniker S.E."/>
            <person name="Holt R.A."/>
            <person name="Evans C.A."/>
            <person name="Gocayne J.D."/>
            <person name="Amanatides P.G."/>
            <person name="Scherer S.E."/>
            <person name="Li P.W."/>
            <person name="Hoskins R.A."/>
            <person name="Galle R.F."/>
            <person name="George R.A."/>
            <person name="Lewis S.E."/>
            <person name="Richards S."/>
            <person name="Ashburner M."/>
            <person name="Henderson S.N."/>
            <person name="Sutton G.G."/>
            <person name="Wortman J.R."/>
            <person name="Yandell M.D."/>
            <person name="Zhang Q."/>
            <person name="Chen L.X."/>
            <person name="Brandon R.C."/>
            <person name="Rogers Y.-H.C."/>
            <person name="Blazej R.G."/>
            <person name="Champe M."/>
            <person name="Pfeiffer B.D."/>
            <person name="Wan K.H."/>
            <person name="Doyle C."/>
            <person name="Baxter E.G."/>
            <person name="Helt G."/>
            <person name="Nelson C.R."/>
            <person name="Miklos G.L.G."/>
            <person name="Abril J.F."/>
            <person name="Agbayani A."/>
            <person name="An H.-J."/>
            <person name="Andrews-Pfannkoch C."/>
            <person name="Baldwin D."/>
            <person name="Ballew R.M."/>
            <person name="Basu A."/>
            <person name="Baxendale J."/>
            <person name="Bayraktaroglu L."/>
            <person name="Beasley E.M."/>
            <person name="Beeson K.Y."/>
            <person name="Benos P.V."/>
            <person name="Berman B.P."/>
            <person name="Bhandari D."/>
            <person name="Bolshakov S."/>
            <person name="Borkova D."/>
            <person name="Botchan M.R."/>
            <person name="Bouck J."/>
            <person name="Brokstein P."/>
            <person name="Brottier P."/>
            <person name="Burtis K.C."/>
            <person name="Busam D.A."/>
            <person name="Butler H."/>
            <person name="Cadieu E."/>
            <person name="Center A."/>
            <person name="Chandra I."/>
            <person name="Cherry J.M."/>
            <person name="Cawley S."/>
            <person name="Dahlke C."/>
            <person name="Davenport L.B."/>
            <person name="Davies P."/>
            <person name="de Pablos B."/>
            <person name="Delcher A."/>
            <person name="Deng Z."/>
            <person name="Mays A.D."/>
            <person name="Dew I."/>
            <person name="Dietz S.M."/>
            <person name="Dodson K."/>
            <person name="Doup L.E."/>
            <person name="Downes M."/>
            <person name="Dugan-Rocha S."/>
            <person name="Dunkov B.C."/>
            <person name="Dunn P."/>
            <person name="Durbin K.J."/>
            <person name="Evangelista C.C."/>
            <person name="Ferraz C."/>
            <person name="Ferriera S."/>
            <person name="Fleischmann W."/>
            <person name="Fosler C."/>
            <person name="Gabrielian A.E."/>
            <person name="Garg N.S."/>
            <person name="Gelbart W.M."/>
            <person name="Glasser K."/>
            <person name="Glodek A."/>
            <person name="Gong F."/>
            <person name="Gorrell J.H."/>
            <person name="Gu Z."/>
            <person name="Guan P."/>
            <person name="Harris M."/>
            <person name="Harris N.L."/>
            <person name="Harvey D.A."/>
            <person name="Heiman T.J."/>
            <person name="Hernandez J.R."/>
            <person name="Houck J."/>
            <person name="Hostin D."/>
            <person name="Houston K.A."/>
            <person name="Howland T.J."/>
            <person name="Wei M.-H."/>
            <person name="Ibegwam C."/>
            <person name="Jalali M."/>
            <person name="Kalush F."/>
            <person name="Karpen G.H."/>
            <person name="Ke Z."/>
            <person name="Kennison J.A."/>
            <person name="Ketchum K.A."/>
            <person name="Kimmel B.E."/>
            <person name="Kodira C.D."/>
            <person name="Kraft C.L."/>
            <person name="Kravitz S."/>
            <person name="Kulp D."/>
            <person name="Lai Z."/>
            <person name="Lasko P."/>
            <person name="Lei Y."/>
            <person name="Levitsky A.A."/>
            <person name="Li J.H."/>
            <person name="Li Z."/>
            <person name="Liang Y."/>
            <person name="Lin X."/>
            <person name="Liu X."/>
            <person name="Mattei B."/>
            <person name="McIntosh T.C."/>
            <person name="McLeod M.P."/>
            <person name="McPherson D."/>
            <person name="Merkulov G."/>
            <person name="Milshina N.V."/>
            <person name="Mobarry C."/>
            <person name="Morris J."/>
            <person name="Moshrefi A."/>
            <person name="Mount S.M."/>
            <person name="Moy M."/>
            <person name="Murphy B."/>
            <person name="Murphy L."/>
            <person name="Muzny D.M."/>
            <person name="Nelson D.L."/>
            <person name="Nelson D.R."/>
            <person name="Nelson K.A."/>
            <person name="Nixon K."/>
            <person name="Nusskern D.R."/>
            <person name="Pacleb J.M."/>
            <person name="Palazzolo M."/>
            <person name="Pittman G.S."/>
            <person name="Pan S."/>
            <person name="Pollard J."/>
            <person name="Puri V."/>
            <person name="Reese M.G."/>
            <person name="Reinert K."/>
            <person name="Remington K."/>
            <person name="Saunders R.D.C."/>
            <person name="Scheeler F."/>
            <person name="Shen H."/>
            <person name="Shue B.C."/>
            <person name="Siden-Kiamos I."/>
            <person name="Simpson M."/>
            <person name="Skupski M.P."/>
            <person name="Smith T.J."/>
            <person name="Spier E."/>
            <person name="Spradling A.C."/>
            <person name="Stapleton M."/>
            <person name="Strong R."/>
            <person name="Sun E."/>
            <person name="Svirskas R."/>
            <person name="Tector C."/>
            <person name="Turner R."/>
            <person name="Venter E."/>
            <person name="Wang A.H."/>
            <person name="Wang X."/>
            <person name="Wang Z.-Y."/>
            <person name="Wassarman D.A."/>
            <person name="Weinstock G.M."/>
            <person name="Weissenbach J."/>
            <person name="Williams S.M."/>
            <person name="Woodage T."/>
            <person name="Worley K.C."/>
            <person name="Wu D."/>
            <person name="Yang S."/>
            <person name="Yao Q.A."/>
            <person name="Ye J."/>
            <person name="Yeh R.-F."/>
            <person name="Zaveri J.S."/>
            <person name="Zhan M."/>
            <person name="Zhang G."/>
            <person name="Zhao Q."/>
            <person name="Zheng L."/>
            <person name="Zheng X.H."/>
            <person name="Zhong F.N."/>
            <person name="Zhong W."/>
            <person name="Zhou X."/>
            <person name="Zhu S.C."/>
            <person name="Zhu X."/>
            <person name="Smith H.O."/>
            <person name="Gibbs R.A."/>
            <person name="Myers E.W."/>
            <person name="Rubin G.M."/>
            <person name="Venter J.C."/>
        </authorList>
    </citation>
    <scope>NUCLEOTIDE SEQUENCE [LARGE SCALE GENOMIC DNA]</scope>
    <source>
        <strain>Berkeley</strain>
    </source>
</reference>
<reference key="4">
    <citation type="journal article" date="2002" name="Genome Biol.">
        <title>Annotation of the Drosophila melanogaster euchromatic genome: a systematic review.</title>
        <authorList>
            <person name="Misra S."/>
            <person name="Crosby M.A."/>
            <person name="Mungall C.J."/>
            <person name="Matthews B.B."/>
            <person name="Campbell K.S."/>
            <person name="Hradecky P."/>
            <person name="Huang Y."/>
            <person name="Kaminker J.S."/>
            <person name="Millburn G.H."/>
            <person name="Prochnik S.E."/>
            <person name="Smith C.D."/>
            <person name="Tupy J.L."/>
            <person name="Whitfield E.J."/>
            <person name="Bayraktaroglu L."/>
            <person name="Berman B.P."/>
            <person name="Bettencourt B.R."/>
            <person name="Celniker S.E."/>
            <person name="de Grey A.D.N.J."/>
            <person name="Drysdale R.A."/>
            <person name="Harris N.L."/>
            <person name="Richter J."/>
            <person name="Russo S."/>
            <person name="Schroeder A.J."/>
            <person name="Shu S.Q."/>
            <person name="Stapleton M."/>
            <person name="Yamada C."/>
            <person name="Ashburner M."/>
            <person name="Gelbart W.M."/>
            <person name="Rubin G.M."/>
            <person name="Lewis S.E."/>
        </authorList>
    </citation>
    <scope>GENOME REANNOTATION</scope>
    <scope>ALTERNATIVE SPLICING</scope>
    <source>
        <strain>Berkeley</strain>
    </source>
</reference>
<reference key="5">
    <citation type="journal article" date="2002" name="Genome Biol.">
        <title>A Drosophila full-length cDNA resource.</title>
        <authorList>
            <person name="Stapleton M."/>
            <person name="Carlson J.W."/>
            <person name="Brokstein P."/>
            <person name="Yu C."/>
            <person name="Champe M."/>
            <person name="George R.A."/>
            <person name="Guarin H."/>
            <person name="Kronmiller B."/>
            <person name="Pacleb J.M."/>
            <person name="Park S."/>
            <person name="Wan K.H."/>
            <person name="Rubin G.M."/>
            <person name="Celniker S.E."/>
        </authorList>
    </citation>
    <scope>NUCLEOTIDE SEQUENCE [LARGE SCALE MRNA] (ISOFORMS A AND K)</scope>
    <source>
        <strain>Berkeley</strain>
        <tissue>Embryo</tissue>
    </source>
</reference>
<reference key="6">
    <citation type="journal article" date="1996" name="J. Biol. Chem.">
        <title>Activity and autophosphorylation of LAMMER protein kinases.</title>
        <authorList>
            <person name="Lee K."/>
            <person name="Du C."/>
            <person name="Horn M."/>
            <person name="Rabinow L."/>
        </authorList>
    </citation>
    <scope>FUNCTION</scope>
    <scope>AUTOPHOSPHORYLATION</scope>
    <scope>MUTAGENESIS OF LYS-508</scope>
</reference>
<reference key="7">
    <citation type="journal article" date="2000" name="Genetics">
        <title>The LAMMER protein kinase encoded by the Doa locus of Drosophila is required in both somatic and germline cells and is expressed as both nuclear and cytoplasmic isoforms throughout development.</title>
        <authorList>
            <person name="Yun B."/>
            <person name="Lee K."/>
            <person name="Farkas R."/>
            <person name="Hitte C."/>
            <person name="Rabinow L."/>
        </authorList>
    </citation>
    <scope>FUNCTION</scope>
    <scope>SUBCELLULAR LOCATION</scope>
    <scope>ALTERNATIVE SPLICING</scope>
    <scope>TISSUE SPECIFICITY</scope>
    <scope>DEVELOPMENTAL STAGE</scope>
</reference>
<reference key="8">
    <citation type="journal article" date="2008" name="Mol. Cell. Biochem.">
        <title>DX16 is a novel SR protein phosphorylated by DOA.</title>
        <authorList>
            <person name="Wan Y."/>
            <person name="Sun M."/>
            <person name="Wang S."/>
            <person name="Liu L."/>
            <person name="Yuan L."/>
            <person name="Xie W."/>
        </authorList>
    </citation>
    <scope>FUNCTION</scope>
    <scope>CATALYTIC ACTIVITY</scope>
    <scope>INTERACTION WITH X16</scope>
    <scope>SUBCELLULAR LOCATION</scope>
    <scope>DEVELOPMENTAL STAGE</scope>
</reference>
<reference key="9">
    <citation type="journal article" date="2010" name="Genetics">
        <title>Drosophila translational elongation factor-1gamma is modified in response to DOA kinase activity and is essential for cellular viability.</title>
        <authorList>
            <person name="Fan Y."/>
            <person name="Schlierf M."/>
            <person name="Gaspar A.C."/>
            <person name="Dreux C."/>
            <person name="Kpebe A."/>
            <person name="Chaney L."/>
            <person name="Mathieu A."/>
            <person name="Hitte C."/>
            <person name="Gremy O."/>
            <person name="Sarot E."/>
            <person name="Horn M."/>
            <person name="Zhao Y."/>
            <person name="Kinzy T.G."/>
            <person name="Rabinow L."/>
        </authorList>
    </citation>
    <scope>CATALYTIC ACTIVITY</scope>
    <scope>INTERACTION WITH EEF1GAMMA</scope>
</reference>
<reference key="10">
    <citation type="journal article" date="2014" name="J. Cell Sci.">
        <title>Protein kinase Darkener of apricot and its substrate EF1gamma regulate organelle transport along microtubules.</title>
        <authorList>
            <person name="Serpinskaya A.S."/>
            <person name="Tuphile K."/>
            <person name="Rabinow L."/>
            <person name="Gelfand V.I."/>
        </authorList>
    </citation>
    <scope>FUNCTION</scope>
</reference>
<comment type="function">
    <text evidence="4 5 7 8 9">Dual specificity kinase involved in the negative regulation of microtubule-based transport through phsophorylation of the microtuble-binding protein eEF1gamma (PubMed:24163433). May function in the control of alternative splicing by phosphorylating serine/arginine-rich splicing factors, the SR proteins, including x16 (PubMed:17828581). Negative regulator of the copia retrotransposon element of the white (w) gene (PubMed:7926721). In the eye, it is required for normal pigmentation, photoreceptor cell development and for organization of interommatidial bristles (PubMed:7926721). Also essential for embryonic segmentation and differentiation of the nervous system (PubMed:11014821, PubMed:7926721, PubMed:8910305).</text>
</comment>
<comment type="function">
    <molecule>Isoform P</molecule>
    <text evidence="7">May be the specific isoform involved in regulation of microtubule-based transport through phosphorylation of the microtubule binding protein eEF1gamma.</text>
</comment>
<comment type="catalytic activity">
    <reaction evidence="6 9">
        <text>L-seryl-[protein] + ATP = O-phospho-L-seryl-[protein] + ADP + H(+)</text>
        <dbReference type="Rhea" id="RHEA:17989"/>
        <dbReference type="Rhea" id="RHEA-COMP:9863"/>
        <dbReference type="Rhea" id="RHEA-COMP:11604"/>
        <dbReference type="ChEBI" id="CHEBI:15378"/>
        <dbReference type="ChEBI" id="CHEBI:29999"/>
        <dbReference type="ChEBI" id="CHEBI:30616"/>
        <dbReference type="ChEBI" id="CHEBI:83421"/>
        <dbReference type="ChEBI" id="CHEBI:456216"/>
        <dbReference type="EC" id="2.7.12.1"/>
    </reaction>
</comment>
<comment type="catalytic activity">
    <reaction evidence="9">
        <text>L-threonyl-[protein] + ATP = O-phospho-L-threonyl-[protein] + ADP + H(+)</text>
        <dbReference type="Rhea" id="RHEA:46608"/>
        <dbReference type="Rhea" id="RHEA-COMP:11060"/>
        <dbReference type="Rhea" id="RHEA-COMP:11605"/>
        <dbReference type="ChEBI" id="CHEBI:15378"/>
        <dbReference type="ChEBI" id="CHEBI:30013"/>
        <dbReference type="ChEBI" id="CHEBI:30616"/>
        <dbReference type="ChEBI" id="CHEBI:61977"/>
        <dbReference type="ChEBI" id="CHEBI:456216"/>
        <dbReference type="EC" id="2.7.12.1"/>
    </reaction>
</comment>
<comment type="catalytic activity">
    <reaction evidence="8 9">
        <text>L-tyrosyl-[protein] + ATP = O-phospho-L-tyrosyl-[protein] + ADP + H(+)</text>
        <dbReference type="Rhea" id="RHEA:10596"/>
        <dbReference type="Rhea" id="RHEA-COMP:10136"/>
        <dbReference type="Rhea" id="RHEA-COMP:20101"/>
        <dbReference type="ChEBI" id="CHEBI:15378"/>
        <dbReference type="ChEBI" id="CHEBI:30616"/>
        <dbReference type="ChEBI" id="CHEBI:46858"/>
        <dbReference type="ChEBI" id="CHEBI:61978"/>
        <dbReference type="ChEBI" id="CHEBI:456216"/>
        <dbReference type="EC" id="2.7.12.1"/>
    </reaction>
</comment>
<comment type="cofactor">
    <cofactor>
        <name>Mg(2+)</name>
        <dbReference type="ChEBI" id="CHEBI:18420"/>
    </cofactor>
</comment>
<comment type="subunit">
    <text evidence="5 6">Interacts (via N-terminus) with x16 (via Arg/Ser-rich region) (PubMed:17828581). Interacts with eEF1gamma (via C-terminus); the interaction is probably direct, is transient and leads to phosphorylation of eEF1gamma by Doa (PubMed:19841092).</text>
</comment>
<comment type="subcellular location">
    <subcellularLocation>
        <location evidence="5">Cytoplasm</location>
    </subcellularLocation>
</comment>
<comment type="subcellular location">
    <molecule>Isoform K</molecule>
    <subcellularLocation>
        <location evidence="4">Cytoplasm</location>
        <location evidence="4">Cytosol</location>
    </subcellularLocation>
</comment>
<comment type="subcellular location">
    <molecule>Isoform A</molecule>
    <subcellularLocation>
        <location evidence="4">Nucleus</location>
    </subcellularLocation>
    <text evidence="4">Mainly nuclear with only low levels present in the cytoplasm.</text>
</comment>
<comment type="alternative products">
    <event type="alternative promoter"/>
    <event type="alternative splicing"/>
    <isoform>
        <id>P49762-1</id>
        <name evidence="15">K</name>
        <name evidence="10 12">105 kDa isoform</name>
        <name>C</name>
        <sequence type="displayed"/>
    </isoform>
    <isoform>
        <id>P49762-2</id>
        <name>A</name>
        <name evidence="10 12">55 kDa isoform</name>
        <sequence type="described" ref="VSP_008268 VSP_008270 VSP_008272"/>
    </isoform>
    <isoform>
        <id>P49762-3</id>
        <name>B</name>
        <sequence type="described" ref="VSP_008269 VSP_008271 VSP_008272"/>
    </isoform>
    <isoform>
        <id>P49762-4</id>
        <name evidence="15">P</name>
        <name evidence="12">227 kDa isoform</name>
        <sequence type="described" ref="VSP_062419"/>
    </isoform>
    <text evidence="4 14">Additional isoforms seem to exist (Probable) (PubMed:11014821). Isoform K seems to be the predominant gene product throughout development (PubMed:11014821).</text>
</comment>
<comment type="tissue specificity">
    <text evidence="4 8">Ubiquitous expression in embryos. Stage 17 embryos show elevated expression in CNS and brain. Ubiquitous expression in larval imaginal disks. Increased expression posterior to the eye-antennal disk morphogenetic furrow.</text>
</comment>
<comment type="developmental stage">
    <text evidence="4 5 8">Expressed ubiquitously at early stages of embryogenesis (at protein level) (PubMed:17828581). Highly expressed in the central nervous system and mesoderm at later stages of embryogenesis (at protein level) (PubMed:17828581). Expressed both maternally (isoform C) and zygotically (isoforms A and C) in all developmental stages.</text>
</comment>
<comment type="PTM">
    <text>Autophosphorylated on serine, threonine and tyrosine residues.</text>
</comment>
<comment type="miscellaneous">
    <molecule>Isoform K</molecule>
    <text>May correspond to the described 105 kDa isoform although there is no translation sequence evidence for this.</text>
</comment>
<comment type="similarity">
    <text evidence="13">Belongs to the protein kinase superfamily. CMGC Ser/Thr protein kinase family. Lammer subfamily.</text>
</comment>
<comment type="sequence caution" evidence="13">
    <conflict type="miscellaneous discrepancy">
        <sequence resource="EMBL-CDS" id="CAA55367"/>
    </conflict>
    <text>Chimera. Chimera of genomic DNA and cDNA.</text>
</comment>